<evidence type="ECO:0000255" key="1">
    <source>
        <dbReference type="HAMAP-Rule" id="MF_01630"/>
    </source>
</evidence>
<comment type="function">
    <text evidence="1">Catalytic subunit of the periplasmic nitrate reductase complex NapAB. Receives electrons from NapB and catalyzes the reduction of nitrate to nitrite.</text>
</comment>
<comment type="catalytic activity">
    <reaction evidence="1">
        <text>2 Fe(II)-[cytochrome] + nitrate + 2 H(+) = 2 Fe(III)-[cytochrome] + nitrite + H2O</text>
        <dbReference type="Rhea" id="RHEA:12909"/>
        <dbReference type="Rhea" id="RHEA-COMP:11777"/>
        <dbReference type="Rhea" id="RHEA-COMP:11778"/>
        <dbReference type="ChEBI" id="CHEBI:15377"/>
        <dbReference type="ChEBI" id="CHEBI:15378"/>
        <dbReference type="ChEBI" id="CHEBI:16301"/>
        <dbReference type="ChEBI" id="CHEBI:17632"/>
        <dbReference type="ChEBI" id="CHEBI:29033"/>
        <dbReference type="ChEBI" id="CHEBI:29034"/>
        <dbReference type="EC" id="1.9.6.1"/>
    </reaction>
</comment>
<comment type="cofactor">
    <cofactor evidence="1">
        <name>[4Fe-4S] cluster</name>
        <dbReference type="ChEBI" id="CHEBI:49883"/>
    </cofactor>
    <text evidence="1">Binds 1 [4Fe-4S] cluster.</text>
</comment>
<comment type="cofactor">
    <cofactor evidence="1">
        <name>Mo-bis(molybdopterin guanine dinucleotide)</name>
        <dbReference type="ChEBI" id="CHEBI:60539"/>
    </cofactor>
    <text evidence="1">Binds 1 molybdenum-bis(molybdopterin guanine dinucleotide) (Mo-bis-MGD) cofactor per subunit.</text>
</comment>
<comment type="subunit">
    <text evidence="1">Component of the periplasmic nitrate reductase NapAB complex composed of NapA and NapB.</text>
</comment>
<comment type="subcellular location">
    <subcellularLocation>
        <location evidence="1">Periplasm</location>
    </subcellularLocation>
</comment>
<comment type="PTM">
    <text evidence="1">Predicted to be exported by the Tat system. The position of the signal peptide cleavage has not been experimentally proven.</text>
</comment>
<comment type="similarity">
    <text evidence="1">Belongs to the prokaryotic molybdopterin-containing oxidoreductase family. NasA/NapA/NarB subfamily.</text>
</comment>
<feature type="signal peptide" description="Tat-type signal" evidence="1">
    <location>
        <begin position="1"/>
        <end position="32"/>
    </location>
</feature>
<feature type="chain" id="PRO_0000045975" description="Periplasmic nitrate reductase" evidence="1">
    <location>
        <begin position="33"/>
        <end position="828"/>
    </location>
</feature>
<feature type="domain" description="4Fe-4S Mo/W bis-MGD-type" evidence="1">
    <location>
        <begin position="37"/>
        <end position="93"/>
    </location>
</feature>
<feature type="binding site" evidence="1">
    <location>
        <position position="44"/>
    </location>
    <ligand>
        <name>[4Fe-4S] cluster</name>
        <dbReference type="ChEBI" id="CHEBI:49883"/>
    </ligand>
</feature>
<feature type="binding site" evidence="1">
    <location>
        <position position="47"/>
    </location>
    <ligand>
        <name>[4Fe-4S] cluster</name>
        <dbReference type="ChEBI" id="CHEBI:49883"/>
    </ligand>
</feature>
<feature type="binding site" evidence="1">
    <location>
        <position position="51"/>
    </location>
    <ligand>
        <name>[4Fe-4S] cluster</name>
        <dbReference type="ChEBI" id="CHEBI:49883"/>
    </ligand>
</feature>
<feature type="binding site" evidence="1">
    <location>
        <position position="79"/>
    </location>
    <ligand>
        <name>[4Fe-4S] cluster</name>
        <dbReference type="ChEBI" id="CHEBI:49883"/>
    </ligand>
</feature>
<feature type="binding site" evidence="1">
    <location>
        <position position="81"/>
    </location>
    <ligand>
        <name>Mo-bis(molybdopterin guanine dinucleotide)</name>
        <dbReference type="ChEBI" id="CHEBI:60539"/>
    </ligand>
</feature>
<feature type="binding site" evidence="1">
    <location>
        <position position="148"/>
    </location>
    <ligand>
        <name>Mo-bis(molybdopterin guanine dinucleotide)</name>
        <dbReference type="ChEBI" id="CHEBI:60539"/>
    </ligand>
</feature>
<feature type="binding site" evidence="1">
    <location>
        <position position="173"/>
    </location>
    <ligand>
        <name>Mo-bis(molybdopterin guanine dinucleotide)</name>
        <dbReference type="ChEBI" id="CHEBI:60539"/>
    </ligand>
</feature>
<feature type="binding site" evidence="1">
    <location>
        <position position="177"/>
    </location>
    <ligand>
        <name>Mo-bis(molybdopterin guanine dinucleotide)</name>
        <dbReference type="ChEBI" id="CHEBI:60539"/>
    </ligand>
</feature>
<feature type="binding site" evidence="1">
    <location>
        <begin position="210"/>
        <end position="217"/>
    </location>
    <ligand>
        <name>Mo-bis(molybdopterin guanine dinucleotide)</name>
        <dbReference type="ChEBI" id="CHEBI:60539"/>
    </ligand>
</feature>
<feature type="binding site" evidence="1">
    <location>
        <begin position="241"/>
        <end position="245"/>
    </location>
    <ligand>
        <name>Mo-bis(molybdopterin guanine dinucleotide)</name>
        <dbReference type="ChEBI" id="CHEBI:60539"/>
    </ligand>
</feature>
<feature type="binding site" evidence="1">
    <location>
        <position position="371"/>
    </location>
    <ligand>
        <name>Mo-bis(molybdopterin guanine dinucleotide)</name>
        <dbReference type="ChEBI" id="CHEBI:60539"/>
    </ligand>
</feature>
<feature type="binding site" evidence="1">
    <location>
        <position position="375"/>
    </location>
    <ligand>
        <name>Mo-bis(molybdopterin guanine dinucleotide)</name>
        <dbReference type="ChEBI" id="CHEBI:60539"/>
    </ligand>
</feature>
<feature type="binding site" evidence="1">
    <location>
        <position position="481"/>
    </location>
    <ligand>
        <name>Mo-bis(molybdopterin guanine dinucleotide)</name>
        <dbReference type="ChEBI" id="CHEBI:60539"/>
    </ligand>
</feature>
<feature type="binding site" evidence="1">
    <location>
        <begin position="507"/>
        <end position="508"/>
    </location>
    <ligand>
        <name>Mo-bis(molybdopterin guanine dinucleotide)</name>
        <dbReference type="ChEBI" id="CHEBI:60539"/>
    </ligand>
</feature>
<feature type="binding site" evidence="1">
    <location>
        <position position="530"/>
    </location>
    <ligand>
        <name>Mo-bis(molybdopterin guanine dinucleotide)</name>
        <dbReference type="ChEBI" id="CHEBI:60539"/>
    </ligand>
</feature>
<feature type="binding site" evidence="1">
    <location>
        <position position="557"/>
    </location>
    <ligand>
        <name>Mo-bis(molybdopterin guanine dinucleotide)</name>
        <dbReference type="ChEBI" id="CHEBI:60539"/>
    </ligand>
</feature>
<feature type="binding site" evidence="1">
    <location>
        <begin position="717"/>
        <end position="726"/>
    </location>
    <ligand>
        <name>Mo-bis(molybdopterin guanine dinucleotide)</name>
        <dbReference type="ChEBI" id="CHEBI:60539"/>
    </ligand>
</feature>
<feature type="binding site" evidence="1">
    <location>
        <position position="793"/>
    </location>
    <ligand>
        <name>substrate</name>
    </ligand>
</feature>
<feature type="binding site" evidence="1">
    <location>
        <position position="801"/>
    </location>
    <ligand>
        <name>Mo-bis(molybdopterin guanine dinucleotide)</name>
        <dbReference type="ChEBI" id="CHEBI:60539"/>
    </ligand>
</feature>
<feature type="binding site" evidence="1">
    <location>
        <position position="818"/>
    </location>
    <ligand>
        <name>Mo-bis(molybdopterin guanine dinucleotide)</name>
        <dbReference type="ChEBI" id="CHEBI:60539"/>
    </ligand>
</feature>
<accession>Q8VL02</accession>
<sequence>MNLSRRDFMKANAAMAAATAAGLSIPVKNVEAAESEIKWDKAVCRFCGTGCAVLVGTKDGRVVASQGDPDAEVNRGLNCIKGYFLPKIMYGKDRLTQPMLRMKDGKYDKNGDFTPVSWDVAFKTMAEKFKAAVKELGPNGVGMFSSGQTTIFEGYAKSKLWKAGFRSNNIDPNARHCMASAAVAFMRTFGMDEPMGCYNDIEQAEAFVLWGSNMAEMHPILWSRITDRRLSNQDVKVAVLSTFEHRSFELADYSLIFKPHTDLVILNYIINYLIQNDAINRDFVNKHTKFKRGETDIGYGLRPENPLEQKAKNVKTAGKMYDSNFDELKALVAEYTLDKAHEMSGVPKDVLENLAKLYADPKKKVVSYWTMGFNQHTRGVWANHLIYNIHLLTGKISIPGCGPFSLTGQPSACGTAREVGTFIHRLPADLVVTNPKHREKAEQIWKLPAGVITDVLGFHAVAQSRALKDGKMRVLWQMCTNNMQGGPNINRETFPGWRNPDNFIVVSDPYPTVSCLAADLMLPTAMWVEKEGAYGNAERRTQFWRQQVKAPGEAKSDVWQLVEFSKYFTTDEMWPAEILDKNPEYKGKTLYDVLYRNGQVDKFPLSELAEGQLNDESYHFGFYLQKGLFEEYASFGRGHGHDLASFDTYHKARGLRWPVVDGKETLWRYREGYDPYVKEGEGVAFYGYPDKKAIILAVPYEPPAESPDEEYDLWLCTGRVLEHWHTGTMTRRVPELHRSFPNNLVWMHPTDAQKRGLRHGDKVKVASRRGEIISFLDTRGRNKVPEGLIYTTFFDAGQLANKLTLDATDPISKETDFKKCAVKVEKAA</sequence>
<gene>
    <name evidence="1" type="primary">napA</name>
</gene>
<reference key="1">
    <citation type="submission" date="2000-11" db="EMBL/GenBank/DDBJ databases">
        <authorList>
            <person name="Hu W."/>
            <person name="Teng Y.-T.A."/>
        </authorList>
    </citation>
    <scope>NUCLEOTIDE SEQUENCE [GENOMIC DNA]</scope>
    <source>
        <strain>ATCC 29523 / Serotype a</strain>
    </source>
</reference>
<name>NAPA_AGGAC</name>
<protein>
    <recommendedName>
        <fullName evidence="1">Periplasmic nitrate reductase</fullName>
        <ecNumber evidence="1">1.9.6.1</ecNumber>
    </recommendedName>
</protein>
<dbReference type="EC" id="1.9.6.1" evidence="1"/>
<dbReference type="EMBL" id="AF321232">
    <property type="protein sequence ID" value="AAL55891.1"/>
    <property type="molecule type" value="Genomic_DNA"/>
</dbReference>
<dbReference type="RefSeq" id="WP_005566990.1">
    <property type="nucleotide sequence ID" value="NZ_VSEU01000010.1"/>
</dbReference>
<dbReference type="SMR" id="Q8VL02"/>
<dbReference type="STRING" id="714.ACT75_06435"/>
<dbReference type="GeneID" id="77210828"/>
<dbReference type="eggNOG" id="COG0243">
    <property type="taxonomic scope" value="Bacteria"/>
</dbReference>
<dbReference type="GO" id="GO:0016020">
    <property type="term" value="C:membrane"/>
    <property type="evidence" value="ECO:0007669"/>
    <property type="project" value="TreeGrafter"/>
</dbReference>
<dbReference type="GO" id="GO:0009325">
    <property type="term" value="C:nitrate reductase complex"/>
    <property type="evidence" value="ECO:0007669"/>
    <property type="project" value="TreeGrafter"/>
</dbReference>
<dbReference type="GO" id="GO:0042597">
    <property type="term" value="C:periplasmic space"/>
    <property type="evidence" value="ECO:0007669"/>
    <property type="project" value="UniProtKB-SubCell"/>
</dbReference>
<dbReference type="GO" id="GO:0051539">
    <property type="term" value="F:4 iron, 4 sulfur cluster binding"/>
    <property type="evidence" value="ECO:0007669"/>
    <property type="project" value="UniProtKB-KW"/>
</dbReference>
<dbReference type="GO" id="GO:0009055">
    <property type="term" value="F:electron transfer activity"/>
    <property type="evidence" value="ECO:0007669"/>
    <property type="project" value="UniProtKB-UniRule"/>
</dbReference>
<dbReference type="GO" id="GO:0005506">
    <property type="term" value="F:iron ion binding"/>
    <property type="evidence" value="ECO:0007669"/>
    <property type="project" value="UniProtKB-UniRule"/>
</dbReference>
<dbReference type="GO" id="GO:0030151">
    <property type="term" value="F:molybdenum ion binding"/>
    <property type="evidence" value="ECO:0007669"/>
    <property type="project" value="InterPro"/>
</dbReference>
<dbReference type="GO" id="GO:0043546">
    <property type="term" value="F:molybdopterin cofactor binding"/>
    <property type="evidence" value="ECO:0007669"/>
    <property type="project" value="InterPro"/>
</dbReference>
<dbReference type="GO" id="GO:0050140">
    <property type="term" value="F:nitrate reductase (cytochrome) activity"/>
    <property type="evidence" value="ECO:0007669"/>
    <property type="project" value="UniProtKB-EC"/>
</dbReference>
<dbReference type="GO" id="GO:0045333">
    <property type="term" value="P:cellular respiration"/>
    <property type="evidence" value="ECO:0007669"/>
    <property type="project" value="UniProtKB-ARBA"/>
</dbReference>
<dbReference type="GO" id="GO:0006777">
    <property type="term" value="P:Mo-molybdopterin cofactor biosynthetic process"/>
    <property type="evidence" value="ECO:0007669"/>
    <property type="project" value="UniProtKB-UniRule"/>
</dbReference>
<dbReference type="GO" id="GO:0042128">
    <property type="term" value="P:nitrate assimilation"/>
    <property type="evidence" value="ECO:0007669"/>
    <property type="project" value="UniProtKB-UniRule"/>
</dbReference>
<dbReference type="CDD" id="cd02791">
    <property type="entry name" value="MopB_CT_Nitrate-R-NapA-like"/>
    <property type="match status" value="1"/>
</dbReference>
<dbReference type="CDD" id="cd02754">
    <property type="entry name" value="MopB_Nitrate-R-NapA-like"/>
    <property type="match status" value="1"/>
</dbReference>
<dbReference type="FunFam" id="2.40.40.20:FF:000005">
    <property type="entry name" value="Periplasmic nitrate reductase"/>
    <property type="match status" value="1"/>
</dbReference>
<dbReference type="Gene3D" id="2.40.40.20">
    <property type="match status" value="1"/>
</dbReference>
<dbReference type="Gene3D" id="3.30.200.210">
    <property type="match status" value="1"/>
</dbReference>
<dbReference type="Gene3D" id="3.40.50.740">
    <property type="match status" value="1"/>
</dbReference>
<dbReference type="Gene3D" id="3.40.228.10">
    <property type="entry name" value="Dimethylsulfoxide Reductase, domain 2"/>
    <property type="match status" value="1"/>
</dbReference>
<dbReference type="HAMAP" id="MF_01630">
    <property type="entry name" value="Nitrate_reduct_NapA"/>
    <property type="match status" value="1"/>
</dbReference>
<dbReference type="InterPro" id="IPR009010">
    <property type="entry name" value="Asp_de-COase-like_dom_sf"/>
</dbReference>
<dbReference type="InterPro" id="IPR041957">
    <property type="entry name" value="CT_Nitrate-R-NapA-like"/>
</dbReference>
<dbReference type="InterPro" id="IPR006657">
    <property type="entry name" value="MoPterin_dinucl-bd_dom"/>
</dbReference>
<dbReference type="InterPro" id="IPR006656">
    <property type="entry name" value="Mopterin_OxRdtase"/>
</dbReference>
<dbReference type="InterPro" id="IPR006963">
    <property type="entry name" value="Mopterin_OxRdtase_4Fe-4S_dom"/>
</dbReference>
<dbReference type="InterPro" id="IPR027467">
    <property type="entry name" value="MopterinOxRdtase_cofactor_BS"/>
</dbReference>
<dbReference type="InterPro" id="IPR010051">
    <property type="entry name" value="Periplasm_NO3_reductase_lsu"/>
</dbReference>
<dbReference type="InterPro" id="IPR050123">
    <property type="entry name" value="Prok_molybdopt-oxidoreductase"/>
</dbReference>
<dbReference type="InterPro" id="IPR006311">
    <property type="entry name" value="TAT_signal"/>
</dbReference>
<dbReference type="InterPro" id="IPR019546">
    <property type="entry name" value="TAT_signal_bac_arc"/>
</dbReference>
<dbReference type="NCBIfam" id="TIGR01706">
    <property type="entry name" value="NAPA"/>
    <property type="match status" value="1"/>
</dbReference>
<dbReference type="NCBIfam" id="NF010055">
    <property type="entry name" value="PRK13532.1"/>
    <property type="match status" value="1"/>
</dbReference>
<dbReference type="NCBIfam" id="TIGR01409">
    <property type="entry name" value="TAT_signal_seq"/>
    <property type="match status" value="1"/>
</dbReference>
<dbReference type="PANTHER" id="PTHR43105:SF11">
    <property type="entry name" value="PERIPLASMIC NITRATE REDUCTASE"/>
    <property type="match status" value="1"/>
</dbReference>
<dbReference type="PANTHER" id="PTHR43105">
    <property type="entry name" value="RESPIRATORY NITRATE REDUCTASE"/>
    <property type="match status" value="1"/>
</dbReference>
<dbReference type="Pfam" id="PF04879">
    <property type="entry name" value="Molybdop_Fe4S4"/>
    <property type="match status" value="1"/>
</dbReference>
<dbReference type="Pfam" id="PF00384">
    <property type="entry name" value="Molybdopterin"/>
    <property type="match status" value="1"/>
</dbReference>
<dbReference type="Pfam" id="PF01568">
    <property type="entry name" value="Molydop_binding"/>
    <property type="match status" value="1"/>
</dbReference>
<dbReference type="SMART" id="SM00926">
    <property type="entry name" value="Molybdop_Fe4S4"/>
    <property type="match status" value="1"/>
</dbReference>
<dbReference type="SUPFAM" id="SSF50692">
    <property type="entry name" value="ADC-like"/>
    <property type="match status" value="1"/>
</dbReference>
<dbReference type="SUPFAM" id="SSF53706">
    <property type="entry name" value="Formate dehydrogenase/DMSO reductase, domains 1-3"/>
    <property type="match status" value="1"/>
</dbReference>
<dbReference type="PROSITE" id="PS51669">
    <property type="entry name" value="4FE4S_MOW_BIS_MGD"/>
    <property type="match status" value="1"/>
</dbReference>
<dbReference type="PROSITE" id="PS00551">
    <property type="entry name" value="MOLYBDOPTERIN_PROK_1"/>
    <property type="match status" value="1"/>
</dbReference>
<dbReference type="PROSITE" id="PS51318">
    <property type="entry name" value="TAT"/>
    <property type="match status" value="1"/>
</dbReference>
<proteinExistence type="inferred from homology"/>
<organism>
    <name type="scientific">Aggregatibacter actinomycetemcomitans</name>
    <name type="common">Actinobacillus actinomycetemcomitans</name>
    <name type="synonym">Haemophilus actinomycetemcomitans</name>
    <dbReference type="NCBI Taxonomy" id="714"/>
    <lineage>
        <taxon>Bacteria</taxon>
        <taxon>Pseudomonadati</taxon>
        <taxon>Pseudomonadota</taxon>
        <taxon>Gammaproteobacteria</taxon>
        <taxon>Pasteurellales</taxon>
        <taxon>Pasteurellaceae</taxon>
        <taxon>Aggregatibacter</taxon>
    </lineage>
</organism>
<keyword id="KW-0004">4Fe-4S</keyword>
<keyword id="KW-0249">Electron transport</keyword>
<keyword id="KW-0408">Iron</keyword>
<keyword id="KW-0411">Iron-sulfur</keyword>
<keyword id="KW-0479">Metal-binding</keyword>
<keyword id="KW-0500">Molybdenum</keyword>
<keyword id="KW-0534">Nitrate assimilation</keyword>
<keyword id="KW-0560">Oxidoreductase</keyword>
<keyword id="KW-0574">Periplasm</keyword>
<keyword id="KW-0732">Signal</keyword>
<keyword id="KW-0813">Transport</keyword>